<sequence length="246" mass="27896">MDEYQKIAVEFGEQAIDETVIQDWLQAFAYQGFDARTIIHNLVQLGGKSWEEDAKKMIILSLTRGNKPKKMVERMSPEGAREVKSLVAKYKIVEGRPGRNGITLSRVLQPWLGGQSKLWKWLKTSYQSQGAQWTALCGQTYPRQMMHPSFAGLIDPSLDQEDFNAVLDAHKLFLFMFSKTINVSLRGAQKRDIEESFSQPMLAAINSSFIDNTQRRAFLTKFGILTSGARATAVVKKIAEVYRKLE</sequence>
<organism>
    <name type="scientific">Sandfly fever sicilian virus</name>
    <name type="common">SFS</name>
    <dbReference type="NCBI Taxonomy" id="28292"/>
    <lineage>
        <taxon>Viruses</taxon>
        <taxon>Riboviria</taxon>
        <taxon>Orthornavirae</taxon>
        <taxon>Negarnaviricota</taxon>
        <taxon>Polyploviricotina</taxon>
        <taxon>Ellioviricetes</taxon>
        <taxon>Bunyavirales</taxon>
        <taxon>Phenuiviridae</taxon>
        <taxon>Phlebovirus</taxon>
        <taxon>Phlebovirus siciliaense</taxon>
    </lineage>
</organism>
<reference key="1">
    <citation type="journal article" date="1989" name="Virology">
        <title>The S RNA segment of Sandfly Fever Sicilian virus: evidence for an ambisense genome.</title>
        <authorList>
            <person name="Marriott A.C."/>
            <person name="Ward V.K."/>
            <person name="Nuttall P.A."/>
        </authorList>
    </citation>
    <scope>NUCLEOTIDE SEQUENCE [GENOMIC RNA]</scope>
</reference>
<reference key="2">
    <citation type="submission" date="1994-01" db="EMBL/GenBank/DDBJ databases">
        <authorList>
            <person name="Marriott A.C."/>
            <person name="Ward V.K."/>
            <person name="Nuttall P.A."/>
        </authorList>
    </citation>
    <scope>SEQUENCE REVISION</scope>
</reference>
<gene>
    <name type="primary">N</name>
</gene>
<accession>P12793</accession>
<dbReference type="EMBL" id="J04418">
    <property type="protein sequence ID" value="AAA47458.1"/>
    <property type="molecule type" value="Genomic_RNA"/>
</dbReference>
<dbReference type="PIR" id="A30180">
    <property type="entry name" value="VHVUSS"/>
</dbReference>
<dbReference type="SMR" id="P12793"/>
<dbReference type="GO" id="GO:0019029">
    <property type="term" value="C:helical viral capsid"/>
    <property type="evidence" value="ECO:0007669"/>
    <property type="project" value="UniProtKB-KW"/>
</dbReference>
<dbReference type="GO" id="GO:0044172">
    <property type="term" value="C:host cell endoplasmic reticulum-Golgi intermediate compartment"/>
    <property type="evidence" value="ECO:0007669"/>
    <property type="project" value="UniProtKB-SubCell"/>
</dbReference>
<dbReference type="GO" id="GO:0044177">
    <property type="term" value="C:host cell Golgi apparatus"/>
    <property type="evidence" value="ECO:0007669"/>
    <property type="project" value="UniProtKB-SubCell"/>
</dbReference>
<dbReference type="GO" id="GO:0042025">
    <property type="term" value="C:host cell nucleus"/>
    <property type="evidence" value="ECO:0007669"/>
    <property type="project" value="UniProtKB-SubCell"/>
</dbReference>
<dbReference type="GO" id="GO:1990904">
    <property type="term" value="C:ribonucleoprotein complex"/>
    <property type="evidence" value="ECO:0007669"/>
    <property type="project" value="UniProtKB-KW"/>
</dbReference>
<dbReference type="GO" id="GO:0019013">
    <property type="term" value="C:viral nucleocapsid"/>
    <property type="evidence" value="ECO:0007669"/>
    <property type="project" value="UniProtKB-KW"/>
</dbReference>
<dbReference type="GO" id="GO:0003723">
    <property type="term" value="F:RNA binding"/>
    <property type="evidence" value="ECO:0007669"/>
    <property type="project" value="UniProtKB-KW"/>
</dbReference>
<dbReference type="InterPro" id="IPR009522">
    <property type="entry name" value="Capsid_Phlebovir/Tenuivir"/>
</dbReference>
<dbReference type="InterPro" id="IPR015971">
    <property type="entry name" value="Nucleocapsid_Phlebovirus"/>
</dbReference>
<dbReference type="Pfam" id="PF05733">
    <property type="entry name" value="Tenui_N"/>
    <property type="match status" value="1"/>
</dbReference>
<dbReference type="PIRSF" id="PIRSF003953">
    <property type="entry name" value="N_PhelboV"/>
    <property type="match status" value="1"/>
</dbReference>
<protein>
    <recommendedName>
        <fullName>Nucleoprotein</fullName>
    </recommendedName>
    <alternativeName>
        <fullName>Nucleocapsid protein</fullName>
        <shortName>Protein N</shortName>
    </alternativeName>
</protein>
<comment type="function">
    <text evidence="1 3">Encapsidates the genomic RNA, protecting it from nucleases. Displays high affinity for single-stranded nucleic acid. The encapsidated genomic RNA is termed the nucleocapsid (NC) or ribonucleoprotein. The ribonucleoprotein has a non-helical structure (By similarity). Serves as template for viral transcription and replication. After replication, the nucleocapsid is recruited to the host Golgi apparatus by glycoprotein Gn for packaging into virus particles (By similarity).</text>
</comment>
<comment type="subunit">
    <text evidence="1 3 4">Homodimer. Homohexamer; ring-shaped, necessary to form the nucleocapsid (By similarity). Homopentamers; opened pentamers in solution (By similarity). Binds to viral genomic RNA (By similarity). Interacts with glycoprotein Gn; this interaction allows packaging of nucleocapsids into virions (By similarity).</text>
</comment>
<comment type="subcellular location">
    <subcellularLocation>
        <location evidence="1">Virion</location>
    </subcellularLocation>
    <subcellularLocation>
        <location evidence="1">Host cytoplasm</location>
    </subcellularLocation>
    <subcellularLocation>
        <location evidence="1">Host nucleus</location>
    </subcellularLocation>
    <subcellularLocation>
        <location evidence="2">Host endoplasmic reticulum-Golgi intermediate compartment</location>
    </subcellularLocation>
    <subcellularLocation>
        <location evidence="2">Host Golgi apparatus</location>
    </subcellularLocation>
</comment>
<comment type="domain">
    <text evidence="4">The N-terminus is involved in homooligomerization.</text>
</comment>
<comment type="similarity">
    <text evidence="5">Belongs to the phlebovirus nucleocapsid protein family.</text>
</comment>
<evidence type="ECO:0000250" key="1">
    <source>
        <dbReference type="UniProtKB" id="D3K5I7"/>
    </source>
</evidence>
<evidence type="ECO:0000250" key="2">
    <source>
        <dbReference type="UniProtKB" id="I6WJ72"/>
    </source>
</evidence>
<evidence type="ECO:0000250" key="3">
    <source>
        <dbReference type="UniProtKB" id="P21700"/>
    </source>
</evidence>
<evidence type="ECO:0000250" key="4">
    <source>
        <dbReference type="UniProtKB" id="P21701"/>
    </source>
</evidence>
<evidence type="ECO:0000305" key="5"/>
<keyword id="KW-0167">Capsid protein</keyword>
<keyword id="KW-1139">Helical capsid protein</keyword>
<keyword id="KW-1035">Host cytoplasm</keyword>
<keyword id="KW-1040">Host Golgi apparatus</keyword>
<keyword id="KW-1048">Host nucleus</keyword>
<keyword id="KW-0687">Ribonucleoprotein</keyword>
<keyword id="KW-0694">RNA-binding</keyword>
<keyword id="KW-0543">Viral nucleoprotein</keyword>
<keyword id="KW-0946">Virion</keyword>
<organismHost>
    <name type="scientific">Homo sapiens</name>
    <name type="common">Human</name>
    <dbReference type="NCBI Taxonomy" id="9606"/>
</organismHost>
<organismHost>
    <name type="scientific">Phlebotomus papatasi</name>
    <name type="common">Sandfly</name>
    <dbReference type="NCBI Taxonomy" id="29031"/>
</organismHost>
<proteinExistence type="inferred from homology"/>
<name>NCAP_SFSV</name>
<feature type="chain" id="PRO_0000221996" description="Nucleoprotein">
    <location>
        <begin position="1"/>
        <end position="246"/>
    </location>
</feature>
<feature type="binding site" evidence="4">
    <location>
        <position position="30"/>
    </location>
    <ligand>
        <name>RNA</name>
        <dbReference type="ChEBI" id="CHEBI:33697"/>
    </ligand>
</feature>
<feature type="binding site" evidence="4">
    <location>
        <position position="33"/>
    </location>
    <ligand>
        <name>RNA</name>
        <dbReference type="ChEBI" id="CHEBI:33697"/>
    </ligand>
</feature>
<feature type="binding site" evidence="4">
    <location>
        <position position="67"/>
    </location>
    <ligand>
        <name>RNA</name>
        <dbReference type="ChEBI" id="CHEBI:33697"/>
    </ligand>
</feature>
<feature type="binding site" evidence="4">
    <location>
        <position position="105"/>
    </location>
    <ligand>
        <name>RNA</name>
        <dbReference type="ChEBI" id="CHEBI:33697"/>
    </ligand>
</feature>
<feature type="binding site" evidence="4">
    <location>
        <position position="106"/>
    </location>
    <ligand>
        <name>RNA</name>
        <dbReference type="ChEBI" id="CHEBI:33697"/>
    </ligand>
</feature>
<feature type="binding site" evidence="4">
    <location>
        <position position="186"/>
    </location>
    <ligand>
        <name>RNA</name>
        <dbReference type="ChEBI" id="CHEBI:33697"/>
    </ligand>
</feature>
<feature type="binding site" evidence="4">
    <location>
        <position position="196"/>
    </location>
    <ligand>
        <name>RNA</name>
        <dbReference type="ChEBI" id="CHEBI:33697"/>
    </ligand>
</feature>